<evidence type="ECO:0000255" key="1">
    <source>
        <dbReference type="PROSITE-ProRule" id="PRU00774"/>
    </source>
</evidence>
<evidence type="ECO:0000256" key="2">
    <source>
        <dbReference type="SAM" id="MobiDB-lite"/>
    </source>
</evidence>
<evidence type="ECO:0000305" key="3"/>
<name>FH16_ARATH</name>
<reference key="1">
    <citation type="journal article" date="1997" name="DNA Res.">
        <title>Structural analysis of Arabidopsis thaliana chromosome 5. I. Sequence features of the 1.6 Mb regions covered by twenty physically assigned P1 clones.</title>
        <authorList>
            <person name="Sato S."/>
            <person name="Kotani H."/>
            <person name="Nakamura Y."/>
            <person name="Kaneko T."/>
            <person name="Asamizu E."/>
            <person name="Fukami M."/>
            <person name="Miyajima N."/>
            <person name="Tabata S."/>
        </authorList>
    </citation>
    <scope>NUCLEOTIDE SEQUENCE [LARGE SCALE GENOMIC DNA]</scope>
    <source>
        <strain>cv. Columbia</strain>
    </source>
</reference>
<reference key="2">
    <citation type="journal article" date="1998" name="DNA Res.">
        <title>Structural analysis of Arabidopsis thaliana chromosome 5. IV. Sequence features of the regions of 1,456,315 bp covered by nineteen physically assigned P1 and TAC clones.</title>
        <authorList>
            <person name="Sato S."/>
            <person name="Kaneko T."/>
            <person name="Kotani H."/>
            <person name="Nakamura Y."/>
            <person name="Asamizu E."/>
            <person name="Miyajima N."/>
            <person name="Tabata S."/>
        </authorList>
    </citation>
    <scope>NUCLEOTIDE SEQUENCE [LARGE SCALE GENOMIC DNA]</scope>
    <source>
        <strain>cv. Columbia</strain>
    </source>
</reference>
<reference key="3">
    <citation type="journal article" date="2017" name="Plant J.">
        <title>Araport11: a complete reannotation of the Arabidopsis thaliana reference genome.</title>
        <authorList>
            <person name="Cheng C.Y."/>
            <person name="Krishnakumar V."/>
            <person name="Chan A.P."/>
            <person name="Thibaud-Nissen F."/>
            <person name="Schobel S."/>
            <person name="Town C.D."/>
        </authorList>
    </citation>
    <scope>GENOME REANNOTATION</scope>
    <source>
        <strain>cv. Columbia</strain>
    </source>
</reference>
<reference key="4">
    <citation type="journal article" date="2002" name="Trends Plant Sci.">
        <title>Formins: intermediates in signal-transduction cascades that affect cytoskeletal reorganization.</title>
        <authorList>
            <person name="Deeks M.J."/>
            <person name="Hussey P.J."/>
            <person name="Davies B."/>
        </authorList>
    </citation>
    <scope>GENE FAMILY ORGANIZATION</scope>
    <scope>NOMENCLATURE</scope>
</reference>
<reference key="5">
    <citation type="journal article" date="2004" name="BMC Genomics">
        <title>Formin homology 2 domains occur in multiple contexts in angiosperms.</title>
        <authorList>
            <person name="Cvrckova F."/>
            <person name="Novotny M."/>
            <person name="Pickova D."/>
            <person name="Zarsky V."/>
        </authorList>
    </citation>
    <scope>GENE FAMILY ORGANIZATION</scope>
    <scope>NOMENCLATURE</scope>
</reference>
<sequence>MSPVEITGADAVVTPPMRGRVPLPPPPPPPMRRSAPSPPPMSGRVPPPPPPPPMFDPKGAGRVICCLRPGQNKSSLKRFQCGKLTNAWEELQRHGEAQTAPEFDLSEIEALFSAAVQNQADKSGSRREAFEANPDKLQLISGADALVPLPPPPPPMPRRSPPPPPPRFDAFDHKGARMVCGFRCPVTKRSSLKPLHWVKITRALQGSLWDELQIQYGESQTAIELDVPEIETLFSVGAKPRPKPKPEKVPLIDLKRANNTIVNLKILKMPLPDMMAAVMAMDESVLDVDQIENLIQLCPTKEEMELLKNYTGDKATLGKSEQCLLELMKVPRFEAKLRVLSFKIPFGTKITKFRKMLNVVNSACEEVRSSQMLKEIMKIILFLGNTLNQGTARGSAVGFRLDSLLILSETRADNNKMTLMHYLCKVLASKAADLLDFHKDLQSLESTLEINLKSLAEEIHAITKGLEKLKQELTASETDGPVSQVFRKLLKDFISSAETQVATVSTLYSSARINADALAHYFGEDPNHYPFEKVSATLLSFIRLFKKAHQENVKQEDLEKKKAATEDVFGGPDHNIDSDTSLDDSEAKSPSRIRPPPSIPRPPSRPRYACCRIPAVNPPPRLVCGPYPLPRLVRVGSPSPPPPSMSGGAPPPPPPPPMLVASRTAPPPHLSHVRSIPFQTRLVMGTSPLPLLVREGAPPPTLPSMSGGAPPPPPPLPMLRYQ</sequence>
<dbReference type="EMBL" id="AB005249">
    <property type="protein sequence ID" value="BAB09941.1"/>
    <property type="status" value="ALT_SEQ"/>
    <property type="molecule type" value="Genomic_DNA"/>
</dbReference>
<dbReference type="EMBL" id="AB010070">
    <property type="protein sequence ID" value="BAB09941.1"/>
    <property type="status" value="JOINED"/>
    <property type="molecule type" value="Genomic_DNA"/>
</dbReference>
<dbReference type="EMBL" id="CP002688">
    <property type="protein sequence ID" value="AED91201.1"/>
    <property type="molecule type" value="Genomic_DNA"/>
</dbReference>
<dbReference type="RefSeq" id="NP_196394.2">
    <molecule id="Q9FF15-1"/>
    <property type="nucleotide sequence ID" value="NM_120859.3"/>
</dbReference>
<dbReference type="SMR" id="Q9FF15"/>
<dbReference type="STRING" id="3702.Q9FF15"/>
<dbReference type="iPTMnet" id="Q9FF15"/>
<dbReference type="PaxDb" id="3702-AT5G07770.1"/>
<dbReference type="EnsemblPlants" id="AT5G07770.1">
    <molecule id="Q9FF15-1"/>
    <property type="protein sequence ID" value="AT5G07770.1"/>
    <property type="gene ID" value="AT5G07770"/>
</dbReference>
<dbReference type="GeneID" id="830670"/>
<dbReference type="Gramene" id="AT5G07770.1">
    <molecule id="Q9FF15-1"/>
    <property type="protein sequence ID" value="AT5G07770.1"/>
    <property type="gene ID" value="AT5G07770"/>
</dbReference>
<dbReference type="KEGG" id="ath:AT5G07770"/>
<dbReference type="Araport" id="AT5G07770"/>
<dbReference type="TAIR" id="AT5G07770">
    <property type="gene designation" value="FH16"/>
</dbReference>
<dbReference type="eggNOG" id="KOG1922">
    <property type="taxonomic scope" value="Eukaryota"/>
</dbReference>
<dbReference type="InParanoid" id="Q9FF15"/>
<dbReference type="PhylomeDB" id="Q9FF15"/>
<dbReference type="PRO" id="PR:Q9FF15"/>
<dbReference type="Proteomes" id="UP000006548">
    <property type="component" value="Chromosome 5"/>
</dbReference>
<dbReference type="ExpressionAtlas" id="Q9FF15">
    <property type="expression patterns" value="baseline and differential"/>
</dbReference>
<dbReference type="GO" id="GO:0003779">
    <property type="term" value="F:actin binding"/>
    <property type="evidence" value="ECO:0000250"/>
    <property type="project" value="TAIR"/>
</dbReference>
<dbReference type="FunFam" id="1.20.58.2220:FF:000020">
    <property type="entry name" value="Formin-like protein"/>
    <property type="match status" value="1"/>
</dbReference>
<dbReference type="Gene3D" id="1.20.58.2220">
    <property type="entry name" value="Formin, FH2 domain"/>
    <property type="match status" value="1"/>
</dbReference>
<dbReference type="InterPro" id="IPR015425">
    <property type="entry name" value="FH2_Formin"/>
</dbReference>
<dbReference type="InterPro" id="IPR042201">
    <property type="entry name" value="FH2_Formin_sf"/>
</dbReference>
<dbReference type="InterPro" id="IPR051144">
    <property type="entry name" value="Formin_homology_domain"/>
</dbReference>
<dbReference type="PANTHER" id="PTHR45733">
    <property type="entry name" value="FORMIN-J"/>
    <property type="match status" value="1"/>
</dbReference>
<dbReference type="PANTHER" id="PTHR45733:SF10">
    <property type="entry name" value="FORMIN-LIKE PROTEIN 15A-RELATED"/>
    <property type="match status" value="1"/>
</dbReference>
<dbReference type="Pfam" id="PF02181">
    <property type="entry name" value="FH2"/>
    <property type="match status" value="1"/>
</dbReference>
<dbReference type="SMART" id="SM00498">
    <property type="entry name" value="FH2"/>
    <property type="match status" value="1"/>
</dbReference>
<dbReference type="SUPFAM" id="SSF101447">
    <property type="entry name" value="Formin homology 2 domain (FH2 domain)"/>
    <property type="match status" value="1"/>
</dbReference>
<dbReference type="PROSITE" id="PS51444">
    <property type="entry name" value="FH2"/>
    <property type="match status" value="1"/>
</dbReference>
<gene>
    <name type="primary">FH16</name>
    <name type="ordered locus">At5g07770</name>
    <name type="ORF">MBK20.23</name>
</gene>
<comment type="alternative products">
    <event type="alternative splicing"/>
    <isoform>
        <id>Q9FF15-1</id>
        <name>1</name>
        <sequence type="displayed"/>
    </isoform>
    <text>A number of isoforms are produced. According to EST sequences.</text>
</comment>
<comment type="similarity">
    <text evidence="3">Belongs to the formin-like family. Class-II subfamily.</text>
</comment>
<comment type="sequence caution" evidence="3">
    <conflict type="erroneous gene model prediction">
        <sequence resource="EMBL-CDS" id="BAB09941"/>
    </conflict>
</comment>
<accession>Q9FF15</accession>
<proteinExistence type="inferred from homology"/>
<keyword id="KW-0025">Alternative splicing</keyword>
<keyword id="KW-1185">Reference proteome</keyword>
<protein>
    <recommendedName>
        <fullName>Formin-like protein 16</fullName>
        <shortName>AtFH16</shortName>
    </recommendedName>
</protein>
<feature type="chain" id="PRO_0000308542" description="Formin-like protein 16">
    <location>
        <begin position="1"/>
        <end position="722"/>
    </location>
</feature>
<feature type="domain" description="FH2" evidence="1">
    <location>
        <begin position="182"/>
        <end position="571"/>
    </location>
</feature>
<feature type="region of interest" description="Disordered" evidence="2">
    <location>
        <begin position="1"/>
        <end position="56"/>
    </location>
</feature>
<feature type="region of interest" description="Disordered" evidence="2">
    <location>
        <begin position="564"/>
        <end position="606"/>
    </location>
</feature>
<feature type="region of interest" description="Disordered" evidence="2">
    <location>
        <begin position="635"/>
        <end position="672"/>
    </location>
</feature>
<feature type="region of interest" description="Disordered" evidence="2">
    <location>
        <begin position="690"/>
        <end position="722"/>
    </location>
</feature>
<feature type="compositionally biased region" description="Pro residues" evidence="2">
    <location>
        <begin position="22"/>
        <end position="55"/>
    </location>
</feature>
<feature type="compositionally biased region" description="Pro residues" evidence="2">
    <location>
        <begin position="593"/>
        <end position="605"/>
    </location>
</feature>
<feature type="compositionally biased region" description="Pro residues" evidence="2">
    <location>
        <begin position="638"/>
        <end position="658"/>
    </location>
</feature>
<feature type="compositionally biased region" description="Pro residues" evidence="2">
    <location>
        <begin position="709"/>
        <end position="722"/>
    </location>
</feature>
<organism>
    <name type="scientific">Arabidopsis thaliana</name>
    <name type="common">Mouse-ear cress</name>
    <dbReference type="NCBI Taxonomy" id="3702"/>
    <lineage>
        <taxon>Eukaryota</taxon>
        <taxon>Viridiplantae</taxon>
        <taxon>Streptophyta</taxon>
        <taxon>Embryophyta</taxon>
        <taxon>Tracheophyta</taxon>
        <taxon>Spermatophyta</taxon>
        <taxon>Magnoliopsida</taxon>
        <taxon>eudicotyledons</taxon>
        <taxon>Gunneridae</taxon>
        <taxon>Pentapetalae</taxon>
        <taxon>rosids</taxon>
        <taxon>malvids</taxon>
        <taxon>Brassicales</taxon>
        <taxon>Brassicaceae</taxon>
        <taxon>Camelineae</taxon>
        <taxon>Arabidopsis</taxon>
    </lineage>
</organism>